<proteinExistence type="evidence at protein level"/>
<gene>
    <name type="primary">CCL14</name>
    <name type="synonym">NCC2</name>
    <name type="synonym">SCYA14</name>
</gene>
<evidence type="ECO:0000269" key="1">
    <source>
    </source>
</evidence>
<evidence type="ECO:0000269" key="2">
    <source>
    </source>
</evidence>
<evidence type="ECO:0000269" key="3">
    <source>
    </source>
</evidence>
<evidence type="ECO:0000269" key="4">
    <source>
    </source>
</evidence>
<evidence type="ECO:0000303" key="5">
    <source>
    </source>
</evidence>
<evidence type="ECO:0000305" key="6"/>
<evidence type="ECO:0007829" key="7">
    <source>
        <dbReference type="PDB" id="2Q8R"/>
    </source>
</evidence>
<name>CCL14_HUMAN</name>
<reference key="1">
    <citation type="journal article" date="1996" name="J. Exp. Med.">
        <title>HCC-1, a novel chemokine from human plasma.</title>
        <authorList>
            <person name="Schulz-Knappe P."/>
            <person name="Maegert H.-J."/>
            <person name="Dewald B."/>
            <person name="Meyer M."/>
            <person name="Cetin Y."/>
            <person name="Kubbies M."/>
            <person name="Tomeczkowski J."/>
            <person name="Kirchhoff K."/>
            <person name="Raida M."/>
            <person name="Adermann K."/>
            <person name="Kist A."/>
            <person name="Reinecke M."/>
            <person name="Sillard R."/>
            <person name="Pardigol A."/>
            <person name="Uguccioni M."/>
            <person name="Baggiolini M."/>
            <person name="Forssmann W.-G."/>
        </authorList>
    </citation>
    <scope>NUCLEOTIDE SEQUENCE [MRNA] (ISOFORM HCC-1)</scope>
    <scope>PROTEIN SEQUENCE OF 20-93</scope>
    <source>
        <tissue>Bone marrow</tissue>
    </source>
</reference>
<reference key="2">
    <citation type="journal article" date="1998" name="Proc. Natl. Acad. Sci. U.S.A.">
        <title>HCC-2, a human chemokine: gene structure, expression pattern, and biological activity.</title>
        <authorList>
            <person name="Pardigol A."/>
            <person name="Forssmann U."/>
            <person name="Zucht H.-D."/>
            <person name="Loetscher P."/>
            <person name="Schulz-Knappe P."/>
            <person name="Baggiolini M."/>
            <person name="Forssmann W.-G."/>
            <person name="Maegert H.-J."/>
        </authorList>
    </citation>
    <scope>NUCLEOTIDE SEQUENCE [MRNA] (ISOFORMS HCC-1 AND HCC-3)</scope>
    <scope>TISSUE SPECIFICITY</scope>
    <source>
        <tissue>Liver</tissue>
    </source>
</reference>
<reference key="3">
    <citation type="journal article" date="1999" name="J. Interferon Cytokine Res.">
        <title>Organization of the chemokine gene cluster on human chromosome 17q11.2 containing the genes for CC chemokine MPIF-1, HCC-2, LEC, and RANTES.</title>
        <authorList>
            <person name="Nomiyama H."/>
            <person name="Fukuda S."/>
            <person name="Iio M."/>
            <person name="Tanase S."/>
            <person name="Miura R."/>
            <person name="Yoshie O."/>
        </authorList>
    </citation>
    <scope>NUCLEOTIDE SEQUENCE [GENOMIC DNA]</scope>
</reference>
<reference key="4">
    <citation type="submission" date="2005-09" db="EMBL/GenBank/DDBJ databases">
        <authorList>
            <person name="Mural R.J."/>
            <person name="Istrail S."/>
            <person name="Sutton G.G."/>
            <person name="Florea L."/>
            <person name="Halpern A.L."/>
            <person name="Mobarry C.M."/>
            <person name="Lippert R."/>
            <person name="Walenz B."/>
            <person name="Shatkay H."/>
            <person name="Dew I."/>
            <person name="Miller J.R."/>
            <person name="Flanigan M.J."/>
            <person name="Edwards N.J."/>
            <person name="Bolanos R."/>
            <person name="Fasulo D."/>
            <person name="Halldorsson B.V."/>
            <person name="Hannenhalli S."/>
            <person name="Turner R."/>
            <person name="Yooseph S."/>
            <person name="Lu F."/>
            <person name="Nusskern D.R."/>
            <person name="Shue B.C."/>
            <person name="Zheng X.H."/>
            <person name="Zhong F."/>
            <person name="Delcher A.L."/>
            <person name="Huson D.H."/>
            <person name="Kravitz S.A."/>
            <person name="Mouchard L."/>
            <person name="Reinert K."/>
            <person name="Remington K.A."/>
            <person name="Clark A.G."/>
            <person name="Waterman M.S."/>
            <person name="Eichler E.E."/>
            <person name="Adams M.D."/>
            <person name="Hunkapiller M.W."/>
            <person name="Myers E.W."/>
            <person name="Venter J.C."/>
        </authorList>
    </citation>
    <scope>NUCLEOTIDE SEQUENCE [LARGE SCALE GENOMIC DNA]</scope>
</reference>
<reference key="5">
    <citation type="journal article" date="2004" name="Genome Res.">
        <title>The status, quality, and expansion of the NIH full-length cDNA project: the Mammalian Gene Collection (MGC).</title>
        <authorList>
            <consortium name="The MGC Project Team"/>
        </authorList>
    </citation>
    <scope>NUCLEOTIDE SEQUENCE [LARGE SCALE MRNA] (ISOFORM HCC-1)</scope>
    <source>
        <tissue>Pancreas</tissue>
        <tissue>Spleen</tissue>
    </source>
</reference>
<reference key="6">
    <citation type="journal article" date="2000" name="Biochemistry">
        <title>Posttranslationally processed forms of the human chemokine HCC-1.</title>
        <authorList>
            <person name="Richter R."/>
            <person name="Schulz-Knappe P."/>
            <person name="John H."/>
            <person name="Forssmann W.-G."/>
        </authorList>
    </citation>
    <scope>PROTEIN SEQUENCE OF 20-32</scope>
    <scope>IDENTIFICATION OF HCC-1(3-74) AND HCC-1(4-74)</scope>
    <scope>IDENTIFICATION BY MASS SPECTROMETRY</scope>
    <scope>GLYCOSYLATION AT SER-26</scope>
</reference>
<reference key="7">
    <citation type="journal article" date="2000" name="J. Exp. Med.">
        <title>Natural proteolytic processing of hemofiltrate CC chemokine 1 generates a potent CC chemokine receptor (CCR)1 and CCR5 agonist with anti-HIV properties.</title>
        <authorList>
            <person name="Detheux M."/>
            <person name="Staendker L."/>
            <person name="Vakili J."/>
            <person name="Muench J."/>
            <person name="Forssmann U."/>
            <person name="Adermann K."/>
            <person name="Poehlmann S."/>
            <person name="Vassart G."/>
            <person name="Kirchhoff F."/>
            <person name="Parmentier M."/>
            <person name="Forssmann W.-G."/>
        </authorList>
    </citation>
    <scope>PROTEIN SEQUENCE OF 20-48</scope>
    <scope>IDENTIFICATION OF HCC-1(9-74)</scope>
    <scope>IDENTIFICATION BY MASS SPECTROMETRY</scope>
    <scope>FUNCTION</scope>
</reference>
<reference key="8">
    <citation type="journal article" date="2007" name="Biochemistry">
        <title>Structural and functional characterization of CC chemokine CCL14.</title>
        <authorList>
            <person name="Blain K.Y."/>
            <person name="Kwiatkowski W."/>
            <person name="Zhao Q."/>
            <person name="La Fleur D."/>
            <person name="Naik C."/>
            <person name="Chun T.-W."/>
            <person name="Tsareva T."/>
            <person name="Kanakaraj P."/>
            <person name="Laird M.W."/>
            <person name="Shah R."/>
            <person name="George L."/>
            <person name="Sanyal I."/>
            <person name="Moore P.A."/>
            <person name="Demeler B."/>
            <person name="Choe S."/>
        </authorList>
    </citation>
    <scope>X-RAY CRYSTALLOGRAPHY (1.82 ANGSTROMS) OF 28-93</scope>
</reference>
<comment type="function">
    <text evidence="2">Has weak activities on human monocytes and acts via receptors that also recognize MIP-1 alpha. It induces intracellular Ca(2+) changes and enzyme release, but no chemotaxis, at concentrations of 100-1,000 nM, and is inactive on T-lymphocytes, neutrophils, and eosinophil leukocytes. Enhances the proliferation of CD34 myeloid progenitor cells. The processed form HCC-1(9-74) is a chemotactic factor that attracts monocytes, eosinophils, and T-cells and is a ligand for CCR1, CCR3 and CCR5.</text>
</comment>
<comment type="subcellular location">
    <subcellularLocation>
        <location>Secreted</location>
    </subcellularLocation>
</comment>
<comment type="alternative products">
    <event type="alternative splicing"/>
    <isoform>
        <id>Q16627-1</id>
        <name>HCC-1</name>
        <sequence type="displayed"/>
    </isoform>
    <isoform>
        <id>Q16627-2</id>
        <name>HCC-3</name>
        <sequence type="described" ref="VSP_001060"/>
    </isoform>
</comment>
<comment type="tissue specificity">
    <text evidence="4">Expressed constitutively in several normal tissues: spleen, liver, skeletal and heart muscle, gut, and bone marrow, present at high concentrations (1-80 nM) in plasma.</text>
</comment>
<comment type="PTM">
    <text>The N-terminal processed forms HCC-1(3-74), HCC-1(4-74) and HCC-1(9-74) are produced in small amounts by proteolytic cleavage after secretion in blood.</text>
</comment>
<comment type="PTM">
    <text evidence="1">HCC-1(1-74), but not HCC-1(3-74) and HCC-1(4-74), is partially O-glycosylated; the O-linked glycan consists of one Gal-GalNAc disaccharide, further modified by two N-acetylneuraminic acids.</text>
</comment>
<comment type="similarity">
    <text evidence="6">Belongs to the intercrine beta (chemokine CC) family.</text>
</comment>
<comment type="online information" name="Wikipedia">
    <link uri="https://en.wikipedia.org/wiki/CCL14"/>
    <text>CCL14 entry</text>
</comment>
<keyword id="KW-0002">3D-structure</keyword>
<keyword id="KW-0025">Alternative splicing</keyword>
<keyword id="KW-0202">Cytokine</keyword>
<keyword id="KW-0903">Direct protein sequencing</keyword>
<keyword id="KW-1015">Disulfide bond</keyword>
<keyword id="KW-0325">Glycoprotein</keyword>
<keyword id="KW-1267">Proteomics identification</keyword>
<keyword id="KW-1185">Reference proteome</keyword>
<keyword id="KW-0964">Secreted</keyword>
<keyword id="KW-0732">Signal</keyword>
<protein>
    <recommendedName>
        <fullName>C-C motif chemokine 14</fullName>
    </recommendedName>
    <alternativeName>
        <fullName>Chemokine CC-1/CC-3</fullName>
        <shortName>HCC-1/HCC-3</shortName>
    </alternativeName>
    <alternativeName>
        <fullName>HCC-1(1-74)</fullName>
    </alternativeName>
    <alternativeName>
        <fullName>NCC-2</fullName>
    </alternativeName>
    <alternativeName>
        <fullName>Small-inducible cytokine A14</fullName>
    </alternativeName>
    <component>
        <recommendedName>
            <fullName>HCC-1(3-74)</fullName>
        </recommendedName>
    </component>
    <component>
        <recommendedName>
            <fullName>HCC-1(4-74)</fullName>
        </recommendedName>
    </component>
    <component>
        <recommendedName>
            <fullName>HCC-1(9-74)</fullName>
        </recommendedName>
    </component>
</protein>
<feature type="signal peptide" evidence="1 2 3">
    <location>
        <begin position="1"/>
        <end position="19"/>
    </location>
</feature>
<feature type="chain" id="PRO_0000005204" description="C-C motif chemokine 14">
    <location>
        <begin position="20"/>
        <end position="93"/>
    </location>
</feature>
<feature type="chain" id="PRO_0000005205" description="HCC-1(3-74)">
    <location>
        <begin position="22"/>
        <end position="93"/>
    </location>
</feature>
<feature type="chain" id="PRO_0000005206" description="HCC-1(4-74)">
    <location>
        <begin position="23"/>
        <end position="93"/>
    </location>
</feature>
<feature type="chain" id="PRO_0000005207" description="HCC-1(9-74)">
    <location>
        <begin position="28"/>
        <end position="93"/>
    </location>
</feature>
<feature type="glycosylation site" description="O-linked (GalNAc...) serine; partial" evidence="1">
    <location>
        <position position="26"/>
    </location>
</feature>
<feature type="disulfide bond">
    <location>
        <begin position="35"/>
        <end position="59"/>
    </location>
</feature>
<feature type="disulfide bond">
    <location>
        <begin position="36"/>
        <end position="75"/>
    </location>
</feature>
<feature type="splice variant" id="VSP_001060" description="In isoform HCC-3." evidence="5">
    <original>R</original>
    <variation>QTGGKPKVVKIQLKLVG</variation>
    <location>
        <position position="27"/>
    </location>
</feature>
<feature type="sequence variant" id="VAR_048707" description="In dbSNP:rs16971802.">
    <original>K</original>
    <variation>E</variation>
    <location>
        <position position="61"/>
    </location>
</feature>
<feature type="strand" evidence="7">
    <location>
        <begin position="33"/>
        <end position="35"/>
    </location>
</feature>
<feature type="helix" evidence="7">
    <location>
        <begin position="46"/>
        <end position="48"/>
    </location>
</feature>
<feature type="strand" evidence="7">
    <location>
        <begin position="49"/>
        <end position="54"/>
    </location>
</feature>
<feature type="strand" evidence="7">
    <location>
        <begin position="59"/>
        <end position="61"/>
    </location>
</feature>
<feature type="strand" evidence="7">
    <location>
        <begin position="64"/>
        <end position="68"/>
    </location>
</feature>
<feature type="strand" evidence="7">
    <location>
        <begin position="73"/>
        <end position="76"/>
    </location>
</feature>
<feature type="helix" evidence="7">
    <location>
        <begin position="81"/>
        <end position="90"/>
    </location>
</feature>
<dbReference type="EMBL" id="Z49270">
    <property type="protein sequence ID" value="CAA89264.1"/>
    <property type="molecule type" value="mRNA"/>
</dbReference>
<dbReference type="EMBL" id="Z70292">
    <property type="protein sequence ID" value="CAA94307.1"/>
    <property type="molecule type" value="mRNA"/>
</dbReference>
<dbReference type="EMBL" id="Z70293">
    <property type="protein sequence ID" value="CAA94309.1"/>
    <property type="molecule type" value="mRNA"/>
</dbReference>
<dbReference type="EMBL" id="Z49269">
    <property type="protein sequence ID" value="CAA89263.1"/>
    <property type="molecule type" value="Genomic_DNA"/>
</dbReference>
<dbReference type="EMBL" id="AF088219">
    <property type="protein sequence ID" value="AAC63329.1"/>
    <property type="molecule type" value="Genomic_DNA"/>
</dbReference>
<dbReference type="EMBL" id="AF088219">
    <property type="protein sequence ID" value="AAF23982.1"/>
    <property type="molecule type" value="Genomic_DNA"/>
</dbReference>
<dbReference type="EMBL" id="CH471147">
    <property type="protein sequence ID" value="EAW80105.1"/>
    <property type="molecule type" value="Genomic_DNA"/>
</dbReference>
<dbReference type="EMBL" id="CH471147">
    <property type="protein sequence ID" value="EAW80106.1"/>
    <property type="molecule type" value="Genomic_DNA"/>
</dbReference>
<dbReference type="EMBL" id="CH471147">
    <property type="protein sequence ID" value="EAW80107.1"/>
    <property type="molecule type" value="Genomic_DNA"/>
</dbReference>
<dbReference type="EMBL" id="CH471147">
    <property type="protein sequence ID" value="EAW80108.1"/>
    <property type="molecule type" value="Genomic_DNA"/>
</dbReference>
<dbReference type="EMBL" id="BC038289">
    <property type="protein sequence ID" value="AAH38289.1"/>
    <property type="molecule type" value="mRNA"/>
</dbReference>
<dbReference type="EMBL" id="BC045165">
    <property type="protein sequence ID" value="AAH45165.1"/>
    <property type="molecule type" value="mRNA"/>
</dbReference>
<dbReference type="CCDS" id="CCDS32624.1">
    <molecule id="Q16627-1"/>
</dbReference>
<dbReference type="CCDS" id="CCDS45652.1">
    <molecule id="Q16627-2"/>
</dbReference>
<dbReference type="RefSeq" id="NP_116738.1">
    <molecule id="Q16627-2"/>
    <property type="nucleotide sequence ID" value="NM_032962.5"/>
</dbReference>
<dbReference type="RefSeq" id="NP_116739.1">
    <molecule id="Q16627-1"/>
    <property type="nucleotide sequence ID" value="NM_032963.4"/>
</dbReference>
<dbReference type="PDB" id="2Q8R">
    <property type="method" value="X-ray"/>
    <property type="resolution" value="1.82 A"/>
    <property type="chains" value="E/F/G/H=28-93"/>
</dbReference>
<dbReference type="PDB" id="2Q8T">
    <property type="method" value="X-ray"/>
    <property type="resolution" value="2.23 A"/>
    <property type="chains" value="A/B/C/D=20-93"/>
</dbReference>
<dbReference type="PDBsum" id="2Q8R"/>
<dbReference type="PDBsum" id="2Q8T"/>
<dbReference type="SMR" id="Q16627"/>
<dbReference type="BioGRID" id="112261">
    <property type="interactions" value="27"/>
</dbReference>
<dbReference type="DIP" id="DIP-5861N"/>
<dbReference type="FunCoup" id="Q16627">
    <property type="interactions" value="594"/>
</dbReference>
<dbReference type="IntAct" id="Q16627">
    <property type="interactions" value="11"/>
</dbReference>
<dbReference type="STRING" id="9606.ENSP00000479097"/>
<dbReference type="GlyCosmos" id="Q16627">
    <property type="glycosylation" value="1 site, 1 glycan"/>
</dbReference>
<dbReference type="GlyGen" id="Q16627">
    <property type="glycosylation" value="1 site, 1 O-linked glycan (1 site)"/>
</dbReference>
<dbReference type="iPTMnet" id="Q16627"/>
<dbReference type="PhosphoSitePlus" id="Q16627"/>
<dbReference type="BioMuta" id="CCL14"/>
<dbReference type="DMDM" id="2493670"/>
<dbReference type="MassIVE" id="Q16627"/>
<dbReference type="PeptideAtlas" id="Q16627"/>
<dbReference type="ProteomicsDB" id="60974">
    <molecule id="Q16627-1"/>
</dbReference>
<dbReference type="ProteomicsDB" id="60975">
    <molecule id="Q16627-2"/>
</dbReference>
<dbReference type="Antibodypedia" id="73663">
    <property type="antibodies" value="340 antibodies from 30 providers"/>
</dbReference>
<dbReference type="DNASU" id="6358"/>
<dbReference type="Ensembl" id="ENST00000618404.5">
    <molecule id="Q16627-1"/>
    <property type="protein sequence ID" value="ENSP00000481023.1"/>
    <property type="gene ID" value="ENSG00000276409.5"/>
</dbReference>
<dbReference type="Ensembl" id="ENST00000619040.4">
    <molecule id="Q16627-2"/>
    <property type="protein sequence ID" value="ENSP00000483302.1"/>
    <property type="gene ID" value="ENSG00000277236.4"/>
</dbReference>
<dbReference type="Ensembl" id="ENST00000622526.1">
    <molecule id="Q16627-2"/>
    <property type="protein sequence ID" value="ENSP00000479097.1"/>
    <property type="gene ID" value="ENSG00000276409.5"/>
</dbReference>
<dbReference type="Ensembl" id="ENST00000632700.1">
    <molecule id="Q16627-1"/>
    <property type="protein sequence ID" value="ENSP00000487948.1"/>
    <property type="gene ID" value="ENSG00000277236.4"/>
</dbReference>
<dbReference type="GeneID" id="6358"/>
<dbReference type="KEGG" id="hsa:6358"/>
<dbReference type="MANE-Select" id="ENST00000618404.5">
    <property type="protein sequence ID" value="ENSP00000481023.1"/>
    <property type="RefSeq nucleotide sequence ID" value="NM_032963.4"/>
    <property type="RefSeq protein sequence ID" value="NP_116739.1"/>
</dbReference>
<dbReference type="UCSC" id="uc010wcq.2">
    <molecule id="Q16627-1"/>
    <property type="organism name" value="human"/>
</dbReference>
<dbReference type="AGR" id="HGNC:10612"/>
<dbReference type="CTD" id="6358"/>
<dbReference type="DisGeNET" id="6358"/>
<dbReference type="GeneCards" id="CCL14"/>
<dbReference type="HGNC" id="HGNC:10612">
    <property type="gene designation" value="CCL14"/>
</dbReference>
<dbReference type="HPA" id="ENSG00000276409">
    <property type="expression patterns" value="Tissue enhanced (lymphoid)"/>
</dbReference>
<dbReference type="MIM" id="601392">
    <property type="type" value="gene"/>
</dbReference>
<dbReference type="neXtProt" id="NX_Q16627"/>
<dbReference type="OpenTargets" id="ENSG00000276409"/>
<dbReference type="PharmGKB" id="PA35545"/>
<dbReference type="VEuPathDB" id="HostDB:ENSG00000276409"/>
<dbReference type="GeneTree" id="ENSGT01100000263482"/>
<dbReference type="HOGENOM" id="CLU_141716_4_2_1"/>
<dbReference type="InParanoid" id="Q16627"/>
<dbReference type="OMA" id="ECCFTYV"/>
<dbReference type="OrthoDB" id="9447832at2759"/>
<dbReference type="PAN-GO" id="Q16627">
    <property type="GO annotations" value="14 GO annotations based on evolutionary models"/>
</dbReference>
<dbReference type="PhylomeDB" id="Q16627"/>
<dbReference type="TreeFam" id="TF334888"/>
<dbReference type="PathwayCommons" id="Q16627"/>
<dbReference type="SignaLink" id="Q16627"/>
<dbReference type="BioGRID-ORCS" id="6358">
    <property type="hits" value="10 hits in 1143 CRISPR screens"/>
</dbReference>
<dbReference type="ChiTaRS" id="CCL14">
    <property type="organism name" value="human"/>
</dbReference>
<dbReference type="EvolutionaryTrace" id="Q16627"/>
<dbReference type="GenomeRNAi" id="6358"/>
<dbReference type="Pharos" id="Q16627">
    <property type="development level" value="Tbio"/>
</dbReference>
<dbReference type="PRO" id="PR:Q16627"/>
<dbReference type="Proteomes" id="UP000005640">
    <property type="component" value="Chromosome 17"/>
</dbReference>
<dbReference type="RNAct" id="Q16627">
    <property type="molecule type" value="protein"/>
</dbReference>
<dbReference type="Bgee" id="ENSG00000276409">
    <property type="expression patterns" value="Expressed in spleen and 93 other cell types or tissues"/>
</dbReference>
<dbReference type="ExpressionAtlas" id="Q16627">
    <property type="expression patterns" value="baseline and differential"/>
</dbReference>
<dbReference type="GO" id="GO:0005615">
    <property type="term" value="C:extracellular space"/>
    <property type="evidence" value="ECO:0000318"/>
    <property type="project" value="GO_Central"/>
</dbReference>
<dbReference type="GO" id="GO:0048020">
    <property type="term" value="F:CCR chemokine receptor binding"/>
    <property type="evidence" value="ECO:0000318"/>
    <property type="project" value="GO_Central"/>
</dbReference>
<dbReference type="GO" id="GO:0008009">
    <property type="term" value="F:chemokine activity"/>
    <property type="evidence" value="ECO:0000318"/>
    <property type="project" value="GO_Central"/>
</dbReference>
<dbReference type="GO" id="GO:0061844">
    <property type="term" value="P:antimicrobial humoral immune response mediated by antimicrobial peptide"/>
    <property type="evidence" value="ECO:0000318"/>
    <property type="project" value="GO_Central"/>
</dbReference>
<dbReference type="GO" id="GO:0060326">
    <property type="term" value="P:cell chemotaxis"/>
    <property type="evidence" value="ECO:0000318"/>
    <property type="project" value="GO_Central"/>
</dbReference>
<dbReference type="GO" id="GO:0070098">
    <property type="term" value="P:chemokine-mediated signaling pathway"/>
    <property type="evidence" value="ECO:0000318"/>
    <property type="project" value="GO_Central"/>
</dbReference>
<dbReference type="GO" id="GO:0006954">
    <property type="term" value="P:inflammatory response"/>
    <property type="evidence" value="ECO:0000318"/>
    <property type="project" value="GO_Central"/>
</dbReference>
<dbReference type="GO" id="GO:0006874">
    <property type="term" value="P:intracellular calcium ion homeostasis"/>
    <property type="evidence" value="ECO:0000304"/>
    <property type="project" value="ProtInc"/>
</dbReference>
<dbReference type="GO" id="GO:0030335">
    <property type="term" value="P:positive regulation of cell migration"/>
    <property type="evidence" value="ECO:0000318"/>
    <property type="project" value="GO_Central"/>
</dbReference>
<dbReference type="GO" id="GO:0008284">
    <property type="term" value="P:positive regulation of cell population proliferation"/>
    <property type="evidence" value="ECO:0000304"/>
    <property type="project" value="ProtInc"/>
</dbReference>
<dbReference type="CDD" id="cd00272">
    <property type="entry name" value="Chemokine_CC"/>
    <property type="match status" value="1"/>
</dbReference>
<dbReference type="FunFam" id="2.40.50.40:FF:000002">
    <property type="entry name" value="C-C motif chemokine"/>
    <property type="match status" value="1"/>
</dbReference>
<dbReference type="Gene3D" id="2.40.50.40">
    <property type="match status" value="1"/>
</dbReference>
<dbReference type="InterPro" id="IPR039809">
    <property type="entry name" value="Chemokine_b/g/d"/>
</dbReference>
<dbReference type="InterPro" id="IPR000827">
    <property type="entry name" value="Chemokine_CC_CS"/>
</dbReference>
<dbReference type="InterPro" id="IPR001811">
    <property type="entry name" value="Chemokine_IL8-like_dom"/>
</dbReference>
<dbReference type="InterPro" id="IPR036048">
    <property type="entry name" value="Interleukin_8-like_sf"/>
</dbReference>
<dbReference type="PANTHER" id="PTHR12015:SF110">
    <property type="entry name" value="C-C MOTIF CHEMOKINE 14"/>
    <property type="match status" value="1"/>
</dbReference>
<dbReference type="PANTHER" id="PTHR12015">
    <property type="entry name" value="SMALL INDUCIBLE CYTOKINE A"/>
    <property type="match status" value="1"/>
</dbReference>
<dbReference type="Pfam" id="PF00048">
    <property type="entry name" value="IL8"/>
    <property type="match status" value="1"/>
</dbReference>
<dbReference type="SMART" id="SM00199">
    <property type="entry name" value="SCY"/>
    <property type="match status" value="1"/>
</dbReference>
<dbReference type="SUPFAM" id="SSF54117">
    <property type="entry name" value="Interleukin 8-like chemokines"/>
    <property type="match status" value="1"/>
</dbReference>
<dbReference type="PROSITE" id="PS00472">
    <property type="entry name" value="SMALL_CYTOKINES_CC"/>
    <property type="match status" value="1"/>
</dbReference>
<organism>
    <name type="scientific">Homo sapiens</name>
    <name type="common">Human</name>
    <dbReference type="NCBI Taxonomy" id="9606"/>
    <lineage>
        <taxon>Eukaryota</taxon>
        <taxon>Metazoa</taxon>
        <taxon>Chordata</taxon>
        <taxon>Craniata</taxon>
        <taxon>Vertebrata</taxon>
        <taxon>Euteleostomi</taxon>
        <taxon>Mammalia</taxon>
        <taxon>Eutheria</taxon>
        <taxon>Euarchontoglires</taxon>
        <taxon>Primates</taxon>
        <taxon>Haplorrhini</taxon>
        <taxon>Catarrhini</taxon>
        <taxon>Hominidae</taxon>
        <taxon>Homo</taxon>
    </lineage>
</organism>
<accession>Q16627</accession>
<accession>E1P649</accession>
<accession>E1P650</accession>
<accession>Q13954</accession>
<sequence>MKISVAAIPFFLLITIALGTKTESSSRGPYHPSECCFTYTTYKIPRQRIMDYYETNSQCSKPGIVFITKRGHSVCTNPSDKWVQDYIKDMKEN</sequence>